<evidence type="ECO:0000255" key="1">
    <source>
        <dbReference type="HAMAP-Rule" id="MF_01269"/>
    </source>
</evidence>
<reference key="1">
    <citation type="journal article" date="2011" name="J. Bacteriol.">
        <title>Comparative genomics of 28 Salmonella enterica isolates: evidence for CRISPR-mediated adaptive sublineage evolution.</title>
        <authorList>
            <person name="Fricke W.F."/>
            <person name="Mammel M.K."/>
            <person name="McDermott P.F."/>
            <person name="Tartera C."/>
            <person name="White D.G."/>
            <person name="Leclerc J.E."/>
            <person name="Ravel J."/>
            <person name="Cebula T.A."/>
        </authorList>
    </citation>
    <scope>NUCLEOTIDE SEQUENCE [LARGE SCALE GENOMIC DNA]</scope>
    <source>
        <strain>CT_02021853</strain>
    </source>
</reference>
<name>AROL_SALDC</name>
<keyword id="KW-0028">Amino-acid biosynthesis</keyword>
<keyword id="KW-0057">Aromatic amino acid biosynthesis</keyword>
<keyword id="KW-0067">ATP-binding</keyword>
<keyword id="KW-0963">Cytoplasm</keyword>
<keyword id="KW-0418">Kinase</keyword>
<keyword id="KW-0460">Magnesium</keyword>
<keyword id="KW-0479">Metal-binding</keyword>
<keyword id="KW-0547">Nucleotide-binding</keyword>
<keyword id="KW-0808">Transferase</keyword>
<organism>
    <name type="scientific">Salmonella dublin (strain CT_02021853)</name>
    <dbReference type="NCBI Taxonomy" id="439851"/>
    <lineage>
        <taxon>Bacteria</taxon>
        <taxon>Pseudomonadati</taxon>
        <taxon>Pseudomonadota</taxon>
        <taxon>Gammaproteobacteria</taxon>
        <taxon>Enterobacterales</taxon>
        <taxon>Enterobacteriaceae</taxon>
        <taxon>Salmonella</taxon>
    </lineage>
</organism>
<feature type="chain" id="PRO_1000140138" description="Shikimate kinase 2">
    <location>
        <begin position="1"/>
        <end position="181"/>
    </location>
</feature>
<feature type="region of interest" description="LID domain">
    <location>
        <begin position="112"/>
        <end position="126"/>
    </location>
</feature>
<feature type="binding site" evidence="1">
    <location>
        <begin position="12"/>
        <end position="17"/>
    </location>
    <ligand>
        <name>ATP</name>
        <dbReference type="ChEBI" id="CHEBI:30616"/>
    </ligand>
</feature>
<feature type="binding site" evidence="1">
    <location>
        <position position="16"/>
    </location>
    <ligand>
        <name>Mg(2+)</name>
        <dbReference type="ChEBI" id="CHEBI:18420"/>
    </ligand>
</feature>
<feature type="binding site" evidence="1">
    <location>
        <position position="32"/>
    </location>
    <ligand>
        <name>Mg(2+)</name>
        <dbReference type="ChEBI" id="CHEBI:18420"/>
    </ligand>
</feature>
<feature type="binding site" evidence="1">
    <location>
        <position position="34"/>
    </location>
    <ligand>
        <name>substrate</name>
    </ligand>
</feature>
<feature type="binding site" evidence="1">
    <location>
        <position position="58"/>
    </location>
    <ligand>
        <name>substrate</name>
    </ligand>
</feature>
<feature type="binding site" evidence="1">
    <location>
        <position position="79"/>
    </location>
    <ligand>
        <name>substrate</name>
    </ligand>
</feature>
<feature type="binding site" evidence="1">
    <location>
        <position position="120"/>
    </location>
    <ligand>
        <name>ATP</name>
        <dbReference type="ChEBI" id="CHEBI:30616"/>
    </ligand>
</feature>
<feature type="binding site" evidence="1">
    <location>
        <position position="139"/>
    </location>
    <ligand>
        <name>substrate</name>
    </ligand>
</feature>
<dbReference type="EC" id="2.7.1.71" evidence="1"/>
<dbReference type="EMBL" id="CP001144">
    <property type="protein sequence ID" value="ACH75891.1"/>
    <property type="molecule type" value="Genomic_DNA"/>
</dbReference>
<dbReference type="RefSeq" id="WP_000983565.1">
    <property type="nucleotide sequence ID" value="NC_011205.1"/>
</dbReference>
<dbReference type="SMR" id="B5FKP3"/>
<dbReference type="KEGG" id="sed:SeD_A0426"/>
<dbReference type="HOGENOM" id="CLU_057607_4_3_6"/>
<dbReference type="UniPathway" id="UPA00053">
    <property type="reaction ID" value="UER00088"/>
</dbReference>
<dbReference type="Proteomes" id="UP000008322">
    <property type="component" value="Chromosome"/>
</dbReference>
<dbReference type="GO" id="GO:0005829">
    <property type="term" value="C:cytosol"/>
    <property type="evidence" value="ECO:0007669"/>
    <property type="project" value="TreeGrafter"/>
</dbReference>
<dbReference type="GO" id="GO:0005524">
    <property type="term" value="F:ATP binding"/>
    <property type="evidence" value="ECO:0007669"/>
    <property type="project" value="UniProtKB-UniRule"/>
</dbReference>
<dbReference type="GO" id="GO:0000287">
    <property type="term" value="F:magnesium ion binding"/>
    <property type="evidence" value="ECO:0007669"/>
    <property type="project" value="UniProtKB-UniRule"/>
</dbReference>
<dbReference type="GO" id="GO:0004765">
    <property type="term" value="F:shikimate kinase activity"/>
    <property type="evidence" value="ECO:0007669"/>
    <property type="project" value="UniProtKB-UniRule"/>
</dbReference>
<dbReference type="GO" id="GO:0008652">
    <property type="term" value="P:amino acid biosynthetic process"/>
    <property type="evidence" value="ECO:0007669"/>
    <property type="project" value="UniProtKB-KW"/>
</dbReference>
<dbReference type="GO" id="GO:0009073">
    <property type="term" value="P:aromatic amino acid family biosynthetic process"/>
    <property type="evidence" value="ECO:0007669"/>
    <property type="project" value="UniProtKB-KW"/>
</dbReference>
<dbReference type="GO" id="GO:0009423">
    <property type="term" value="P:chorismate biosynthetic process"/>
    <property type="evidence" value="ECO:0007669"/>
    <property type="project" value="UniProtKB-UniRule"/>
</dbReference>
<dbReference type="CDD" id="cd00464">
    <property type="entry name" value="SK"/>
    <property type="match status" value="1"/>
</dbReference>
<dbReference type="FunFam" id="3.40.50.300:FF:000408">
    <property type="entry name" value="Shikimate kinase 2"/>
    <property type="match status" value="1"/>
</dbReference>
<dbReference type="Gene3D" id="3.40.50.300">
    <property type="entry name" value="P-loop containing nucleotide triphosphate hydrolases"/>
    <property type="match status" value="1"/>
</dbReference>
<dbReference type="HAMAP" id="MF_00109">
    <property type="entry name" value="Shikimate_kinase"/>
    <property type="match status" value="1"/>
</dbReference>
<dbReference type="HAMAP" id="MF_01269">
    <property type="entry name" value="Shikimate_kinase_2"/>
    <property type="match status" value="1"/>
</dbReference>
<dbReference type="InterPro" id="IPR027417">
    <property type="entry name" value="P-loop_NTPase"/>
</dbReference>
<dbReference type="InterPro" id="IPR031322">
    <property type="entry name" value="Shikimate/glucono_kinase"/>
</dbReference>
<dbReference type="InterPro" id="IPR000623">
    <property type="entry name" value="Shikimate_kinase/TSH1"/>
</dbReference>
<dbReference type="InterPro" id="IPR027544">
    <property type="entry name" value="Shikimate_kinase_2"/>
</dbReference>
<dbReference type="InterPro" id="IPR023000">
    <property type="entry name" value="Shikimate_kinase_CS"/>
</dbReference>
<dbReference type="NCBIfam" id="NF002988">
    <property type="entry name" value="PRK03731.1"/>
    <property type="match status" value="1"/>
</dbReference>
<dbReference type="PANTHER" id="PTHR21087">
    <property type="entry name" value="SHIKIMATE KINASE"/>
    <property type="match status" value="1"/>
</dbReference>
<dbReference type="PANTHER" id="PTHR21087:SF21">
    <property type="entry name" value="SHIKIMATE KINASE 2"/>
    <property type="match status" value="1"/>
</dbReference>
<dbReference type="Pfam" id="PF01202">
    <property type="entry name" value="SKI"/>
    <property type="match status" value="1"/>
</dbReference>
<dbReference type="PRINTS" id="PR01100">
    <property type="entry name" value="SHIKIMTKNASE"/>
</dbReference>
<dbReference type="SUPFAM" id="SSF52540">
    <property type="entry name" value="P-loop containing nucleoside triphosphate hydrolases"/>
    <property type="match status" value="1"/>
</dbReference>
<dbReference type="PROSITE" id="PS01128">
    <property type="entry name" value="SHIKIMATE_KINASE"/>
    <property type="match status" value="1"/>
</dbReference>
<comment type="function">
    <text evidence="1">Catalyzes the specific phosphorylation of the 3-hydroxyl group of shikimic acid using ATP as a cosubstrate.</text>
</comment>
<comment type="catalytic activity">
    <reaction evidence="1">
        <text>shikimate + ATP = 3-phosphoshikimate + ADP + H(+)</text>
        <dbReference type="Rhea" id="RHEA:13121"/>
        <dbReference type="ChEBI" id="CHEBI:15378"/>
        <dbReference type="ChEBI" id="CHEBI:30616"/>
        <dbReference type="ChEBI" id="CHEBI:36208"/>
        <dbReference type="ChEBI" id="CHEBI:145989"/>
        <dbReference type="ChEBI" id="CHEBI:456216"/>
        <dbReference type="EC" id="2.7.1.71"/>
    </reaction>
</comment>
<comment type="cofactor">
    <cofactor evidence="1">
        <name>Mg(2+)</name>
        <dbReference type="ChEBI" id="CHEBI:18420"/>
    </cofactor>
    <text evidence="1">Binds 1 Mg(2+) ion per subunit.</text>
</comment>
<comment type="pathway">
    <text evidence="1">Metabolic intermediate biosynthesis; chorismate biosynthesis; chorismate from D-erythrose 4-phosphate and phosphoenolpyruvate: step 5/7.</text>
</comment>
<comment type="subunit">
    <text evidence="1">Monomer.</text>
</comment>
<comment type="subcellular location">
    <subcellularLocation>
        <location evidence="1">Cytoplasm</location>
    </subcellularLocation>
</comment>
<comment type="domain">
    <text evidence="1">The LID domain closes over the active site upon ATP binding.</text>
</comment>
<comment type="similarity">
    <text evidence="1">Belongs to the shikimate kinase family. AroL subfamily.</text>
</comment>
<sequence length="181" mass="19790">MMQPLYLVGPRGCGKTTIGMALAQATGFRFADTDRWLQSHVQMSVADIVEKEGWGGFRARETAALEAVSAPSTVVATGGGIILTDYNRRYMHRVGVVIYLCAPVSTLVNRLEAEPEADLRPTLTGKPLSEEVREVLEQRDALYRETAHYIIDATKAPAQVVSEIIAALPPSTQRLQGDVYT</sequence>
<proteinExistence type="inferred from homology"/>
<protein>
    <recommendedName>
        <fullName evidence="1">Shikimate kinase 2</fullName>
        <shortName evidence="1">SK 2</shortName>
        <ecNumber evidence="1">2.7.1.71</ecNumber>
    </recommendedName>
</protein>
<accession>B5FKP3</accession>
<gene>
    <name evidence="1" type="primary">aroL</name>
    <name type="ordered locus">SeD_A0426</name>
</gene>